<proteinExistence type="inferred from homology"/>
<organism>
    <name type="scientific">Ruthia magnifica subsp. Calyptogena magnifica</name>
    <dbReference type="NCBI Taxonomy" id="413404"/>
    <lineage>
        <taxon>Bacteria</taxon>
        <taxon>Pseudomonadati</taxon>
        <taxon>Pseudomonadota</taxon>
        <taxon>Gammaproteobacteria</taxon>
        <taxon>Candidatus Pseudothioglobaceae</taxon>
        <taxon>Candidatus Ruthturnera</taxon>
    </lineage>
</organism>
<protein>
    <recommendedName>
        <fullName evidence="1">Lipoyl synthase</fullName>
        <ecNumber evidence="1">2.8.1.8</ecNumber>
    </recommendedName>
    <alternativeName>
        <fullName evidence="1">Lip-syn</fullName>
        <shortName evidence="1">LS</shortName>
    </alternativeName>
    <alternativeName>
        <fullName evidence="1">Lipoate synthase</fullName>
    </alternativeName>
    <alternativeName>
        <fullName evidence="1">Lipoic acid synthase</fullName>
    </alternativeName>
    <alternativeName>
        <fullName evidence="1">Sulfur insertion protein LipA</fullName>
    </alternativeName>
</protein>
<gene>
    <name evidence="1" type="primary">lipA</name>
    <name type="ordered locus">Rmag_0543</name>
</gene>
<feature type="chain" id="PRO_0000325307" description="Lipoyl synthase">
    <location>
        <begin position="1"/>
        <end position="315"/>
    </location>
</feature>
<feature type="domain" description="Radical SAM core" evidence="2">
    <location>
        <begin position="74"/>
        <end position="291"/>
    </location>
</feature>
<feature type="binding site" evidence="1">
    <location>
        <position position="62"/>
    </location>
    <ligand>
        <name>[4Fe-4S] cluster</name>
        <dbReference type="ChEBI" id="CHEBI:49883"/>
        <label>1</label>
    </ligand>
</feature>
<feature type="binding site" evidence="1">
    <location>
        <position position="67"/>
    </location>
    <ligand>
        <name>[4Fe-4S] cluster</name>
        <dbReference type="ChEBI" id="CHEBI:49883"/>
        <label>1</label>
    </ligand>
</feature>
<feature type="binding site" evidence="1">
    <location>
        <position position="73"/>
    </location>
    <ligand>
        <name>[4Fe-4S] cluster</name>
        <dbReference type="ChEBI" id="CHEBI:49883"/>
        <label>1</label>
    </ligand>
</feature>
<feature type="binding site" evidence="1">
    <location>
        <position position="88"/>
    </location>
    <ligand>
        <name>[4Fe-4S] cluster</name>
        <dbReference type="ChEBI" id="CHEBI:49883"/>
        <label>2</label>
        <note>4Fe-4S-S-AdoMet</note>
    </ligand>
</feature>
<feature type="binding site" evidence="1">
    <location>
        <position position="92"/>
    </location>
    <ligand>
        <name>[4Fe-4S] cluster</name>
        <dbReference type="ChEBI" id="CHEBI:49883"/>
        <label>2</label>
        <note>4Fe-4S-S-AdoMet</note>
    </ligand>
</feature>
<feature type="binding site" evidence="1">
    <location>
        <position position="95"/>
    </location>
    <ligand>
        <name>[4Fe-4S] cluster</name>
        <dbReference type="ChEBI" id="CHEBI:49883"/>
        <label>2</label>
        <note>4Fe-4S-S-AdoMet</note>
    </ligand>
</feature>
<feature type="binding site" evidence="1">
    <location>
        <position position="302"/>
    </location>
    <ligand>
        <name>[4Fe-4S] cluster</name>
        <dbReference type="ChEBI" id="CHEBI:49883"/>
        <label>1</label>
    </ligand>
</feature>
<sequence length="315" mass="35868">MLQEIDIKSLKGKSKVVRLKIKPDSERLPIKKPNWIRIKHVASQKVEQLKKTLRSQKLFTVCEEAQCPNLSECFNHGAATFMIMGQICTRRCPFCDVAHGKPKALDVDEPKHLANTIKKMQLKYVVITSVDRDDLRDGGAQHFKTCIDNIRLSTPKVKIEILTPDFRGRIDKVLEVFKSCSPNVFNHNLETVPSLYQKVRPGANYNYSLRLLKAFKQQHPFVITKSGLMLGVGESEKQVINVLKDLRKHNVDMLTLGQYLQPSKHHLAVEAYIHPNQFDKYKKIALKLGFSQVASGPMVRSSYHADLQIKGELIS</sequence>
<dbReference type="EC" id="2.8.1.8" evidence="1"/>
<dbReference type="EMBL" id="CP000488">
    <property type="protein sequence ID" value="ABL02295.1"/>
    <property type="molecule type" value="Genomic_DNA"/>
</dbReference>
<dbReference type="RefSeq" id="WP_011737920.1">
    <property type="nucleotide sequence ID" value="NC_008610.1"/>
</dbReference>
<dbReference type="SMR" id="A1AWI8"/>
<dbReference type="STRING" id="413404.Rmag_0543"/>
<dbReference type="KEGG" id="rma:Rmag_0543"/>
<dbReference type="eggNOG" id="COG0320">
    <property type="taxonomic scope" value="Bacteria"/>
</dbReference>
<dbReference type="HOGENOM" id="CLU_033144_2_1_6"/>
<dbReference type="OrthoDB" id="9787898at2"/>
<dbReference type="UniPathway" id="UPA00538">
    <property type="reaction ID" value="UER00593"/>
</dbReference>
<dbReference type="Proteomes" id="UP000002587">
    <property type="component" value="Chromosome"/>
</dbReference>
<dbReference type="GO" id="GO:0005737">
    <property type="term" value="C:cytoplasm"/>
    <property type="evidence" value="ECO:0007669"/>
    <property type="project" value="UniProtKB-SubCell"/>
</dbReference>
<dbReference type="GO" id="GO:0051539">
    <property type="term" value="F:4 iron, 4 sulfur cluster binding"/>
    <property type="evidence" value="ECO:0007669"/>
    <property type="project" value="UniProtKB-UniRule"/>
</dbReference>
<dbReference type="GO" id="GO:0016992">
    <property type="term" value="F:lipoate synthase activity"/>
    <property type="evidence" value="ECO:0007669"/>
    <property type="project" value="UniProtKB-UniRule"/>
</dbReference>
<dbReference type="GO" id="GO:0046872">
    <property type="term" value="F:metal ion binding"/>
    <property type="evidence" value="ECO:0007669"/>
    <property type="project" value="UniProtKB-KW"/>
</dbReference>
<dbReference type="FunFam" id="3.20.20.70:FF:000040">
    <property type="entry name" value="Lipoyl synthase"/>
    <property type="match status" value="1"/>
</dbReference>
<dbReference type="Gene3D" id="3.20.20.70">
    <property type="entry name" value="Aldolase class I"/>
    <property type="match status" value="1"/>
</dbReference>
<dbReference type="HAMAP" id="MF_00206">
    <property type="entry name" value="Lipoyl_synth"/>
    <property type="match status" value="1"/>
</dbReference>
<dbReference type="InterPro" id="IPR013785">
    <property type="entry name" value="Aldolase_TIM"/>
</dbReference>
<dbReference type="InterPro" id="IPR006638">
    <property type="entry name" value="Elp3/MiaA/NifB-like_rSAM"/>
</dbReference>
<dbReference type="InterPro" id="IPR003698">
    <property type="entry name" value="Lipoyl_synth"/>
</dbReference>
<dbReference type="InterPro" id="IPR007197">
    <property type="entry name" value="rSAM"/>
</dbReference>
<dbReference type="NCBIfam" id="TIGR00510">
    <property type="entry name" value="lipA"/>
    <property type="match status" value="1"/>
</dbReference>
<dbReference type="NCBIfam" id="NF004019">
    <property type="entry name" value="PRK05481.1"/>
    <property type="match status" value="1"/>
</dbReference>
<dbReference type="NCBIfam" id="NF009544">
    <property type="entry name" value="PRK12928.1"/>
    <property type="match status" value="1"/>
</dbReference>
<dbReference type="PANTHER" id="PTHR10949">
    <property type="entry name" value="LIPOYL SYNTHASE"/>
    <property type="match status" value="1"/>
</dbReference>
<dbReference type="PANTHER" id="PTHR10949:SF0">
    <property type="entry name" value="LIPOYL SYNTHASE, MITOCHONDRIAL"/>
    <property type="match status" value="1"/>
</dbReference>
<dbReference type="Pfam" id="PF04055">
    <property type="entry name" value="Radical_SAM"/>
    <property type="match status" value="1"/>
</dbReference>
<dbReference type="PIRSF" id="PIRSF005963">
    <property type="entry name" value="Lipoyl_synth"/>
    <property type="match status" value="1"/>
</dbReference>
<dbReference type="SFLD" id="SFLDF00271">
    <property type="entry name" value="lipoyl_synthase"/>
    <property type="match status" value="1"/>
</dbReference>
<dbReference type="SFLD" id="SFLDG01058">
    <property type="entry name" value="lipoyl_synthase_like"/>
    <property type="match status" value="1"/>
</dbReference>
<dbReference type="SMART" id="SM00729">
    <property type="entry name" value="Elp3"/>
    <property type="match status" value="1"/>
</dbReference>
<dbReference type="SUPFAM" id="SSF102114">
    <property type="entry name" value="Radical SAM enzymes"/>
    <property type="match status" value="1"/>
</dbReference>
<dbReference type="PROSITE" id="PS51918">
    <property type="entry name" value="RADICAL_SAM"/>
    <property type="match status" value="1"/>
</dbReference>
<name>LIPA_RUTMC</name>
<accession>A1AWI8</accession>
<evidence type="ECO:0000255" key="1">
    <source>
        <dbReference type="HAMAP-Rule" id="MF_00206"/>
    </source>
</evidence>
<evidence type="ECO:0000255" key="2">
    <source>
        <dbReference type="PROSITE-ProRule" id="PRU01266"/>
    </source>
</evidence>
<comment type="function">
    <text evidence="1">Catalyzes the radical-mediated insertion of two sulfur atoms into the C-6 and C-8 positions of the octanoyl moiety bound to the lipoyl domains of lipoate-dependent enzymes, thereby converting the octanoylated domains into lipoylated derivatives.</text>
</comment>
<comment type="catalytic activity">
    <reaction evidence="1">
        <text>[[Fe-S] cluster scaffold protein carrying a second [4Fe-4S](2+) cluster] + N(6)-octanoyl-L-lysyl-[protein] + 2 oxidized [2Fe-2S]-[ferredoxin] + 2 S-adenosyl-L-methionine + 4 H(+) = [[Fe-S] cluster scaffold protein] + N(6)-[(R)-dihydrolipoyl]-L-lysyl-[protein] + 4 Fe(3+) + 2 hydrogen sulfide + 2 5'-deoxyadenosine + 2 L-methionine + 2 reduced [2Fe-2S]-[ferredoxin]</text>
        <dbReference type="Rhea" id="RHEA:16585"/>
        <dbReference type="Rhea" id="RHEA-COMP:9928"/>
        <dbReference type="Rhea" id="RHEA-COMP:10000"/>
        <dbReference type="Rhea" id="RHEA-COMP:10001"/>
        <dbReference type="Rhea" id="RHEA-COMP:10475"/>
        <dbReference type="Rhea" id="RHEA-COMP:14568"/>
        <dbReference type="Rhea" id="RHEA-COMP:14569"/>
        <dbReference type="ChEBI" id="CHEBI:15378"/>
        <dbReference type="ChEBI" id="CHEBI:17319"/>
        <dbReference type="ChEBI" id="CHEBI:29034"/>
        <dbReference type="ChEBI" id="CHEBI:29919"/>
        <dbReference type="ChEBI" id="CHEBI:33722"/>
        <dbReference type="ChEBI" id="CHEBI:33737"/>
        <dbReference type="ChEBI" id="CHEBI:33738"/>
        <dbReference type="ChEBI" id="CHEBI:57844"/>
        <dbReference type="ChEBI" id="CHEBI:59789"/>
        <dbReference type="ChEBI" id="CHEBI:78809"/>
        <dbReference type="ChEBI" id="CHEBI:83100"/>
        <dbReference type="EC" id="2.8.1.8"/>
    </reaction>
</comment>
<comment type="cofactor">
    <cofactor evidence="1">
        <name>[4Fe-4S] cluster</name>
        <dbReference type="ChEBI" id="CHEBI:49883"/>
    </cofactor>
    <text evidence="1">Binds 2 [4Fe-4S] clusters per subunit. One cluster is coordinated with 3 cysteines and an exchangeable S-adenosyl-L-methionine.</text>
</comment>
<comment type="pathway">
    <text evidence="1">Protein modification; protein lipoylation via endogenous pathway; protein N(6)-(lipoyl)lysine from octanoyl-[acyl-carrier-protein]: step 2/2.</text>
</comment>
<comment type="subcellular location">
    <subcellularLocation>
        <location evidence="1">Cytoplasm</location>
    </subcellularLocation>
</comment>
<comment type="similarity">
    <text evidence="1">Belongs to the radical SAM superfamily. Lipoyl synthase family.</text>
</comment>
<reference key="1">
    <citation type="journal article" date="2007" name="Science">
        <title>The Calyptogena magnifica chemoautotrophic symbiont genome.</title>
        <authorList>
            <person name="Newton I.L.G."/>
            <person name="Woyke T."/>
            <person name="Auchtung T.A."/>
            <person name="Dilly G.F."/>
            <person name="Dutton R.J."/>
            <person name="Fisher M.C."/>
            <person name="Fontanez K.M."/>
            <person name="Lau E."/>
            <person name="Stewart F.J."/>
            <person name="Richardson P.M."/>
            <person name="Barry K.W."/>
            <person name="Saunders E."/>
            <person name="Detter J.C."/>
            <person name="Wu D."/>
            <person name="Eisen J.A."/>
            <person name="Cavanaugh C.M."/>
        </authorList>
    </citation>
    <scope>NUCLEOTIDE SEQUENCE [LARGE SCALE GENOMIC DNA]</scope>
</reference>
<keyword id="KW-0004">4Fe-4S</keyword>
<keyword id="KW-0963">Cytoplasm</keyword>
<keyword id="KW-0408">Iron</keyword>
<keyword id="KW-0411">Iron-sulfur</keyword>
<keyword id="KW-0479">Metal-binding</keyword>
<keyword id="KW-0949">S-adenosyl-L-methionine</keyword>
<keyword id="KW-0808">Transferase</keyword>